<name>GLYA_RHIR8</name>
<keyword id="KW-0028">Amino-acid biosynthesis</keyword>
<keyword id="KW-0963">Cytoplasm</keyword>
<keyword id="KW-0554">One-carbon metabolism</keyword>
<keyword id="KW-0663">Pyridoxal phosphate</keyword>
<keyword id="KW-0808">Transferase</keyword>
<protein>
    <recommendedName>
        <fullName evidence="1">Serine hydroxymethyltransferase</fullName>
        <shortName evidence="1">SHMT</shortName>
        <shortName evidence="1">Serine methylase</shortName>
        <ecNumber evidence="1">2.1.2.1</ecNumber>
    </recommendedName>
</protein>
<comment type="function">
    <text evidence="1">Catalyzes the reversible interconversion of serine and glycine with tetrahydrofolate (THF) serving as the one-carbon carrier. This reaction serves as the major source of one-carbon groups required for the biosynthesis of purines, thymidylate, methionine, and other important biomolecules. Also exhibits THF-independent aldolase activity toward beta-hydroxyamino acids, producing glycine and aldehydes, via a retro-aldol mechanism.</text>
</comment>
<comment type="catalytic activity">
    <reaction evidence="1">
        <text>(6R)-5,10-methylene-5,6,7,8-tetrahydrofolate + glycine + H2O = (6S)-5,6,7,8-tetrahydrofolate + L-serine</text>
        <dbReference type="Rhea" id="RHEA:15481"/>
        <dbReference type="ChEBI" id="CHEBI:15377"/>
        <dbReference type="ChEBI" id="CHEBI:15636"/>
        <dbReference type="ChEBI" id="CHEBI:33384"/>
        <dbReference type="ChEBI" id="CHEBI:57305"/>
        <dbReference type="ChEBI" id="CHEBI:57453"/>
        <dbReference type="EC" id="2.1.2.1"/>
    </reaction>
</comment>
<comment type="cofactor">
    <cofactor evidence="1">
        <name>pyridoxal 5'-phosphate</name>
        <dbReference type="ChEBI" id="CHEBI:597326"/>
    </cofactor>
</comment>
<comment type="pathway">
    <text evidence="1">One-carbon metabolism; tetrahydrofolate interconversion.</text>
</comment>
<comment type="pathway">
    <text evidence="1">Amino-acid biosynthesis; glycine biosynthesis; glycine from L-serine: step 1/1.</text>
</comment>
<comment type="subunit">
    <text evidence="1">Homodimer.</text>
</comment>
<comment type="subcellular location">
    <subcellularLocation>
        <location evidence="1">Cytoplasm</location>
    </subcellularLocation>
</comment>
<comment type="similarity">
    <text evidence="1">Belongs to the SHMT family.</text>
</comment>
<sequence length="432" mass="46622">MTSASTEPFFNRSLADTDPEIFGAIGKELGRQRHEIELIASENIVSRAVLEAQGSIMTNKYAEGYPGKRYYGGCQYVDIAEELAIERAKKLFGVNFANVQPNSGSQMNQAVFLALLQPGDTFMGLDLNSGGHLTHGSPVNMSGKWFNVVSYGVREGDNLLDMEAVQRKAEETKPKLIIAGGTAYSRIWDWKRFREIADSVGAYLMVDMAHIAGLVAGGQHPSPFPHCHVATTTTHKSLRGPRGGMILTNDEDLAKKFNSAVFPGLQGGPLMHVIAAKAVALGEALQPEFQDYAAQIVKNAKALSETLISGGVDVVSGGTDNHLMLVDLRKKNATGKRAEAALGRAYVTCNKNGIPFDPEKPFVTSGVRLGTPAGTTRGFKEAEFREIGNLIIEVLDGLKVANSDEGNAAVEAAVREKVIKLTDRFPMYGYMG</sequence>
<reference key="1">
    <citation type="journal article" date="2009" name="J. Bacteriol.">
        <title>Genome sequences of three Agrobacterium biovars help elucidate the evolution of multichromosome genomes in bacteria.</title>
        <authorList>
            <person name="Slater S.C."/>
            <person name="Goldman B.S."/>
            <person name="Goodner B."/>
            <person name="Setubal J.C."/>
            <person name="Farrand S.K."/>
            <person name="Nester E.W."/>
            <person name="Burr T.J."/>
            <person name="Banta L."/>
            <person name="Dickerman A.W."/>
            <person name="Paulsen I."/>
            <person name="Otten L."/>
            <person name="Suen G."/>
            <person name="Welch R."/>
            <person name="Almeida N.F."/>
            <person name="Arnold F."/>
            <person name="Burton O.T."/>
            <person name="Du Z."/>
            <person name="Ewing A."/>
            <person name="Godsy E."/>
            <person name="Heisel S."/>
            <person name="Houmiel K.L."/>
            <person name="Jhaveri J."/>
            <person name="Lu J."/>
            <person name="Miller N.M."/>
            <person name="Norton S."/>
            <person name="Chen Q."/>
            <person name="Phoolcharoen W."/>
            <person name="Ohlin V."/>
            <person name="Ondrusek D."/>
            <person name="Pride N."/>
            <person name="Stricklin S.L."/>
            <person name="Sun J."/>
            <person name="Wheeler C."/>
            <person name="Wilson L."/>
            <person name="Zhu H."/>
            <person name="Wood D.W."/>
        </authorList>
    </citation>
    <scope>NUCLEOTIDE SEQUENCE [LARGE SCALE GENOMIC DNA]</scope>
    <source>
        <strain>K84 / ATCC BAA-868</strain>
    </source>
</reference>
<organism>
    <name type="scientific">Rhizobium rhizogenes (strain K84 / ATCC BAA-868)</name>
    <name type="common">Agrobacterium radiobacter</name>
    <dbReference type="NCBI Taxonomy" id="311403"/>
    <lineage>
        <taxon>Bacteria</taxon>
        <taxon>Pseudomonadati</taxon>
        <taxon>Pseudomonadota</taxon>
        <taxon>Alphaproteobacteria</taxon>
        <taxon>Hyphomicrobiales</taxon>
        <taxon>Rhizobiaceae</taxon>
        <taxon>Rhizobium/Agrobacterium group</taxon>
        <taxon>Rhizobium</taxon>
    </lineage>
</organism>
<proteinExistence type="inferred from homology"/>
<dbReference type="EC" id="2.1.2.1" evidence="1"/>
<dbReference type="EMBL" id="CP000628">
    <property type="protein sequence ID" value="ACM26111.1"/>
    <property type="molecule type" value="Genomic_DNA"/>
</dbReference>
<dbReference type="RefSeq" id="WP_007692804.1">
    <property type="nucleotide sequence ID" value="NC_011985.1"/>
</dbReference>
<dbReference type="SMR" id="B9JCX4"/>
<dbReference type="STRING" id="311403.Arad_1752"/>
<dbReference type="GeneID" id="86847990"/>
<dbReference type="KEGG" id="ara:Arad_1752"/>
<dbReference type="eggNOG" id="COG0112">
    <property type="taxonomic scope" value="Bacteria"/>
</dbReference>
<dbReference type="HOGENOM" id="CLU_022477_2_1_5"/>
<dbReference type="UniPathway" id="UPA00193"/>
<dbReference type="UniPathway" id="UPA00288">
    <property type="reaction ID" value="UER01023"/>
</dbReference>
<dbReference type="Proteomes" id="UP000001600">
    <property type="component" value="Chromosome 1"/>
</dbReference>
<dbReference type="GO" id="GO:0005829">
    <property type="term" value="C:cytosol"/>
    <property type="evidence" value="ECO:0007669"/>
    <property type="project" value="TreeGrafter"/>
</dbReference>
<dbReference type="GO" id="GO:0004372">
    <property type="term" value="F:glycine hydroxymethyltransferase activity"/>
    <property type="evidence" value="ECO:0007669"/>
    <property type="project" value="UniProtKB-UniRule"/>
</dbReference>
<dbReference type="GO" id="GO:0030170">
    <property type="term" value="F:pyridoxal phosphate binding"/>
    <property type="evidence" value="ECO:0007669"/>
    <property type="project" value="UniProtKB-UniRule"/>
</dbReference>
<dbReference type="GO" id="GO:0019264">
    <property type="term" value="P:glycine biosynthetic process from serine"/>
    <property type="evidence" value="ECO:0007669"/>
    <property type="project" value="UniProtKB-UniRule"/>
</dbReference>
<dbReference type="GO" id="GO:0035999">
    <property type="term" value="P:tetrahydrofolate interconversion"/>
    <property type="evidence" value="ECO:0007669"/>
    <property type="project" value="UniProtKB-UniRule"/>
</dbReference>
<dbReference type="CDD" id="cd00378">
    <property type="entry name" value="SHMT"/>
    <property type="match status" value="1"/>
</dbReference>
<dbReference type="FunFam" id="3.40.640.10:FF:000001">
    <property type="entry name" value="Serine hydroxymethyltransferase"/>
    <property type="match status" value="1"/>
</dbReference>
<dbReference type="FunFam" id="3.90.1150.10:FF:000003">
    <property type="entry name" value="Serine hydroxymethyltransferase"/>
    <property type="match status" value="1"/>
</dbReference>
<dbReference type="Gene3D" id="3.90.1150.10">
    <property type="entry name" value="Aspartate Aminotransferase, domain 1"/>
    <property type="match status" value="1"/>
</dbReference>
<dbReference type="Gene3D" id="3.40.640.10">
    <property type="entry name" value="Type I PLP-dependent aspartate aminotransferase-like (Major domain)"/>
    <property type="match status" value="1"/>
</dbReference>
<dbReference type="HAMAP" id="MF_00051">
    <property type="entry name" value="SHMT"/>
    <property type="match status" value="1"/>
</dbReference>
<dbReference type="InterPro" id="IPR015424">
    <property type="entry name" value="PyrdxlP-dep_Trfase"/>
</dbReference>
<dbReference type="InterPro" id="IPR015421">
    <property type="entry name" value="PyrdxlP-dep_Trfase_major"/>
</dbReference>
<dbReference type="InterPro" id="IPR015422">
    <property type="entry name" value="PyrdxlP-dep_Trfase_small"/>
</dbReference>
<dbReference type="InterPro" id="IPR001085">
    <property type="entry name" value="Ser_HO-MeTrfase"/>
</dbReference>
<dbReference type="InterPro" id="IPR049943">
    <property type="entry name" value="Ser_HO-MeTrfase-like"/>
</dbReference>
<dbReference type="InterPro" id="IPR019798">
    <property type="entry name" value="Ser_HO-MeTrfase_PLP_BS"/>
</dbReference>
<dbReference type="InterPro" id="IPR039429">
    <property type="entry name" value="SHMT-like_dom"/>
</dbReference>
<dbReference type="NCBIfam" id="NF000586">
    <property type="entry name" value="PRK00011.1"/>
    <property type="match status" value="1"/>
</dbReference>
<dbReference type="PANTHER" id="PTHR11680">
    <property type="entry name" value="SERINE HYDROXYMETHYLTRANSFERASE"/>
    <property type="match status" value="1"/>
</dbReference>
<dbReference type="PANTHER" id="PTHR11680:SF35">
    <property type="entry name" value="SERINE HYDROXYMETHYLTRANSFERASE 1"/>
    <property type="match status" value="1"/>
</dbReference>
<dbReference type="Pfam" id="PF00464">
    <property type="entry name" value="SHMT"/>
    <property type="match status" value="1"/>
</dbReference>
<dbReference type="PIRSF" id="PIRSF000412">
    <property type="entry name" value="SHMT"/>
    <property type="match status" value="1"/>
</dbReference>
<dbReference type="SUPFAM" id="SSF53383">
    <property type="entry name" value="PLP-dependent transferases"/>
    <property type="match status" value="1"/>
</dbReference>
<dbReference type="PROSITE" id="PS00096">
    <property type="entry name" value="SHMT"/>
    <property type="match status" value="1"/>
</dbReference>
<feature type="chain" id="PRO_1000195424" description="Serine hydroxymethyltransferase">
    <location>
        <begin position="1"/>
        <end position="432"/>
    </location>
</feature>
<feature type="binding site" evidence="1">
    <location>
        <position position="127"/>
    </location>
    <ligand>
        <name>(6S)-5,6,7,8-tetrahydrofolate</name>
        <dbReference type="ChEBI" id="CHEBI:57453"/>
    </ligand>
</feature>
<feature type="binding site" evidence="1">
    <location>
        <begin position="131"/>
        <end position="133"/>
    </location>
    <ligand>
        <name>(6S)-5,6,7,8-tetrahydrofolate</name>
        <dbReference type="ChEBI" id="CHEBI:57453"/>
    </ligand>
</feature>
<feature type="site" description="Plays an important role in substrate specificity" evidence="1">
    <location>
        <position position="235"/>
    </location>
</feature>
<feature type="modified residue" description="N6-(pyridoxal phosphate)lysine" evidence="1">
    <location>
        <position position="236"/>
    </location>
</feature>
<accession>B9JCX4</accession>
<gene>
    <name evidence="1" type="primary">glyA</name>
    <name type="ordered locus">Arad_1752</name>
</gene>
<evidence type="ECO:0000255" key="1">
    <source>
        <dbReference type="HAMAP-Rule" id="MF_00051"/>
    </source>
</evidence>